<accession>Q7A4E7</accession>
<organism>
    <name type="scientific">Staphylococcus aureus (strain N315)</name>
    <dbReference type="NCBI Taxonomy" id="158879"/>
    <lineage>
        <taxon>Bacteria</taxon>
        <taxon>Bacillati</taxon>
        <taxon>Bacillota</taxon>
        <taxon>Bacilli</taxon>
        <taxon>Bacillales</taxon>
        <taxon>Staphylococcaceae</taxon>
        <taxon>Staphylococcus</taxon>
    </lineage>
</organism>
<gene>
    <name evidence="2" type="primary">atpF</name>
    <name type="ordered locus">SA1909</name>
</gene>
<keyword id="KW-0066">ATP synthesis</keyword>
<keyword id="KW-1003">Cell membrane</keyword>
<keyword id="KW-0138">CF(0)</keyword>
<keyword id="KW-0375">Hydrogen ion transport</keyword>
<keyword id="KW-0406">Ion transport</keyword>
<keyword id="KW-0472">Membrane</keyword>
<keyword id="KW-0812">Transmembrane</keyword>
<keyword id="KW-1133">Transmembrane helix</keyword>
<keyword id="KW-0813">Transport</keyword>
<dbReference type="EMBL" id="BA000018">
    <property type="protein sequence ID" value="BAB43193.1"/>
    <property type="molecule type" value="Genomic_DNA"/>
</dbReference>
<dbReference type="PIR" id="H90003">
    <property type="entry name" value="H90003"/>
</dbReference>
<dbReference type="RefSeq" id="WP_000140679.1">
    <property type="nucleotide sequence ID" value="NC_002745.2"/>
</dbReference>
<dbReference type="SMR" id="Q7A4E7"/>
<dbReference type="EnsemblBacteria" id="BAB43193">
    <property type="protein sequence ID" value="BAB43193"/>
    <property type="gene ID" value="BAB43193"/>
</dbReference>
<dbReference type="KEGG" id="sau:SA1909"/>
<dbReference type="HOGENOM" id="CLU_079215_4_2_9"/>
<dbReference type="GO" id="GO:0045121">
    <property type="term" value="C:membrane raft"/>
    <property type="evidence" value="ECO:0007669"/>
    <property type="project" value="UniProtKB-SubCell"/>
</dbReference>
<dbReference type="GO" id="GO:0005886">
    <property type="term" value="C:plasma membrane"/>
    <property type="evidence" value="ECO:0007669"/>
    <property type="project" value="UniProtKB-SubCell"/>
</dbReference>
<dbReference type="GO" id="GO:0045259">
    <property type="term" value="C:proton-transporting ATP synthase complex"/>
    <property type="evidence" value="ECO:0007669"/>
    <property type="project" value="UniProtKB-KW"/>
</dbReference>
<dbReference type="GO" id="GO:0046933">
    <property type="term" value="F:proton-transporting ATP synthase activity, rotational mechanism"/>
    <property type="evidence" value="ECO:0007669"/>
    <property type="project" value="UniProtKB-UniRule"/>
</dbReference>
<dbReference type="GO" id="GO:0046961">
    <property type="term" value="F:proton-transporting ATPase activity, rotational mechanism"/>
    <property type="evidence" value="ECO:0007669"/>
    <property type="project" value="TreeGrafter"/>
</dbReference>
<dbReference type="CDD" id="cd06503">
    <property type="entry name" value="ATP-synt_Fo_b"/>
    <property type="match status" value="1"/>
</dbReference>
<dbReference type="HAMAP" id="MF_01398">
    <property type="entry name" value="ATP_synth_b_bprime"/>
    <property type="match status" value="1"/>
</dbReference>
<dbReference type="InterPro" id="IPR028987">
    <property type="entry name" value="ATP_synth_B-like_membr_sf"/>
</dbReference>
<dbReference type="InterPro" id="IPR002146">
    <property type="entry name" value="ATP_synth_b/b'su_bac/chlpt"/>
</dbReference>
<dbReference type="InterPro" id="IPR005864">
    <property type="entry name" value="ATP_synth_F0_bsu_bac"/>
</dbReference>
<dbReference type="InterPro" id="IPR050059">
    <property type="entry name" value="ATP_synthase_B_chain"/>
</dbReference>
<dbReference type="NCBIfam" id="TIGR01144">
    <property type="entry name" value="ATP_synt_b"/>
    <property type="match status" value="1"/>
</dbReference>
<dbReference type="NCBIfam" id="NF009987">
    <property type="entry name" value="PRK13453.1"/>
    <property type="match status" value="1"/>
</dbReference>
<dbReference type="PANTHER" id="PTHR33445:SF1">
    <property type="entry name" value="ATP SYNTHASE SUBUNIT B"/>
    <property type="match status" value="1"/>
</dbReference>
<dbReference type="PANTHER" id="PTHR33445">
    <property type="entry name" value="ATP SYNTHASE SUBUNIT B', CHLOROPLASTIC"/>
    <property type="match status" value="1"/>
</dbReference>
<dbReference type="Pfam" id="PF00430">
    <property type="entry name" value="ATP-synt_B"/>
    <property type="match status" value="1"/>
</dbReference>
<dbReference type="SUPFAM" id="SSF81573">
    <property type="entry name" value="F1F0 ATP synthase subunit B, membrane domain"/>
    <property type="match status" value="1"/>
</dbReference>
<name>ATPF_STAAN</name>
<protein>
    <recommendedName>
        <fullName evidence="2">ATP synthase subunit b</fullName>
    </recommendedName>
    <alternativeName>
        <fullName evidence="2">ATP synthase F(0) sector subunit b</fullName>
    </alternativeName>
    <alternativeName>
        <fullName evidence="2">ATPase subunit I</fullName>
    </alternativeName>
    <alternativeName>
        <fullName evidence="2">F-type ATPase subunit b</fullName>
        <shortName evidence="2">F-ATPase subunit b</shortName>
    </alternativeName>
</protein>
<feature type="chain" id="PRO_0000223709" description="ATP synthase subunit b">
    <location>
        <begin position="1"/>
        <end position="173"/>
    </location>
</feature>
<feature type="transmembrane region" description="Helical" evidence="2">
    <location>
        <begin position="15"/>
        <end position="35"/>
    </location>
</feature>
<sequence length="173" mass="19539">MTETANLFVLGAAGGVEWGTVIVQVLTFIVLLALLKKFAWGPLKDVMDKRERDINRDIDDAEQAKLNAQKLEEENKQKLKETQEEVQKILEDAKVQARQQQEQIIHEANVRANGMIETAQSEINSQKERAIADINNQVSELSVLIASKVLRKEISEQDQKALVDKYLKEAGDK</sequence>
<reference key="1">
    <citation type="journal article" date="2001" name="Lancet">
        <title>Whole genome sequencing of meticillin-resistant Staphylococcus aureus.</title>
        <authorList>
            <person name="Kuroda M."/>
            <person name="Ohta T."/>
            <person name="Uchiyama I."/>
            <person name="Baba T."/>
            <person name="Yuzawa H."/>
            <person name="Kobayashi I."/>
            <person name="Cui L."/>
            <person name="Oguchi A."/>
            <person name="Aoki K."/>
            <person name="Nagai Y."/>
            <person name="Lian J.-Q."/>
            <person name="Ito T."/>
            <person name="Kanamori M."/>
            <person name="Matsumaru H."/>
            <person name="Maruyama A."/>
            <person name="Murakami H."/>
            <person name="Hosoyama A."/>
            <person name="Mizutani-Ui Y."/>
            <person name="Takahashi N.K."/>
            <person name="Sawano T."/>
            <person name="Inoue R."/>
            <person name="Kaito C."/>
            <person name="Sekimizu K."/>
            <person name="Hirakawa H."/>
            <person name="Kuhara S."/>
            <person name="Goto S."/>
            <person name="Yabuzaki J."/>
            <person name="Kanehisa M."/>
            <person name="Yamashita A."/>
            <person name="Oshima K."/>
            <person name="Furuya K."/>
            <person name="Yoshino C."/>
            <person name="Shiba T."/>
            <person name="Hattori M."/>
            <person name="Ogasawara N."/>
            <person name="Hayashi H."/>
            <person name="Hiramatsu K."/>
        </authorList>
    </citation>
    <scope>NUCLEOTIDE SEQUENCE [LARGE SCALE GENOMIC DNA]</scope>
    <source>
        <strain>N315</strain>
    </source>
</reference>
<reference key="2">
    <citation type="submission" date="2007-10" db="UniProtKB">
        <title>Shotgun proteomic analysis of total and membrane protein extracts of S. aureus strain N315.</title>
        <authorList>
            <person name="Vaezzadeh A.R."/>
            <person name="Deshusses J."/>
            <person name="Lescuyer P."/>
            <person name="Hochstrasser D.F."/>
        </authorList>
    </citation>
    <scope>IDENTIFICATION BY MASS SPECTROMETRY [LARGE SCALE ANALYSIS]</scope>
    <source>
        <strain>N315</strain>
    </source>
</reference>
<reference key="3">
    <citation type="journal article" date="2010" name="Genes Dev.">
        <title>Functional microdomains in bacterial membranes.</title>
        <authorList>
            <person name="Lopez D."/>
            <person name="Kolter R."/>
        </authorList>
    </citation>
    <scope>IDENTIFICATION BY MASS SPECTROMETRY</scope>
    <scope>SUBCELLULAR LOCATION</scope>
</reference>
<proteinExistence type="evidence at protein level"/>
<evidence type="ECO:0000255" key="1"/>
<evidence type="ECO:0000255" key="2">
    <source>
        <dbReference type="HAMAP-Rule" id="MF_01398"/>
    </source>
</evidence>
<evidence type="ECO:0000269" key="3">
    <source>
    </source>
</evidence>
<comment type="function">
    <text evidence="2">F(1)F(0) ATP synthase produces ATP from ADP in the presence of a proton or sodium gradient. F-type ATPases consist of two structural domains, F(1) containing the extramembraneous catalytic core and F(0) containing the membrane proton channel, linked together by a central stalk and a peripheral stalk. During catalysis, ATP synthesis in the catalytic domain of F(1) is coupled via a rotary mechanism of the central stalk subunits to proton translocation.</text>
</comment>
<comment type="function">
    <text evidence="2">Component of the F(0) channel, it forms part of the peripheral stalk, linking F(1) to F(0).</text>
</comment>
<comment type="subunit">
    <text evidence="2">F-type ATPases have 2 components, F(1) - the catalytic core - and F(0) - the membrane proton channel. F(1) has five subunits: alpha(3), beta(3), gamma(1), delta(1), epsilon(1). F(0) has three main subunits: a(1), b(2) and c(10-14). The alpha and beta chains form an alternating ring which encloses part of the gamma chain. F(1) is attached to F(0) by a central stalk formed by the gamma and epsilon chains, while a peripheral stalk is formed by the delta and b chains.</text>
</comment>
<comment type="subcellular location">
    <subcellularLocation>
        <location evidence="2 3">Cell membrane</location>
        <topology evidence="2">Single-pass membrane protein</topology>
    </subcellularLocation>
    <subcellularLocation>
        <location evidence="3">Membrane raft</location>
        <topology evidence="1">Single-pass membrane protein</topology>
    </subcellularLocation>
    <text evidence="3">Present in detergent-resistant membrane (DRM) fractions that may be equivalent to eukaryotic membrane rafts; these rafts include proteins involved in signaling, molecule trafficking and protein secretion.</text>
</comment>
<comment type="similarity">
    <text evidence="2">Belongs to the ATPase B chain family.</text>
</comment>